<sequence>MVLVCAGPGTGKSAFVLAYALKSKVPTLYFSADSDAFTQISRSVSILSGWSLERSTRAVREQSIEESIANDLDEIPIRFNYKASPSLDEIENALAAYDALYEDFPALIVVDNITNVRTESGDGDDPFSGLESLMDYLHEMARETGSCVIGLHHVTGPYNDGDKAIPLGGIKGQIGRVPEMVLTLHRESDGFGPDSLNVSTVKNRGGKSDPSGNDYAALEFIGDTMQINDFDH</sequence>
<accession>O64257</accession>
<name>VG65_BPMD2</name>
<feature type="chain" id="PRO_0000164803" description="Gene 65 protein">
    <location>
        <begin position="1"/>
        <end position="232"/>
    </location>
</feature>
<protein>
    <recommendedName>
        <fullName>Gene 65 protein</fullName>
    </recommendedName>
    <alternativeName>
        <fullName>Gp65</fullName>
    </alternativeName>
</protein>
<organism>
    <name type="scientific">Mycobacterium phage D29</name>
    <name type="common">Mycobacteriophage D29</name>
    <dbReference type="NCBI Taxonomy" id="28369"/>
    <lineage>
        <taxon>Viruses</taxon>
        <taxon>Duplodnaviria</taxon>
        <taxon>Heunggongvirae</taxon>
        <taxon>Uroviricota</taxon>
        <taxon>Caudoviricetes</taxon>
        <taxon>Fromanvirus</taxon>
    </lineage>
</organism>
<proteinExistence type="predicted"/>
<organismHost>
    <name type="scientific">Mycobacterium</name>
    <dbReference type="NCBI Taxonomy" id="1763"/>
</organismHost>
<dbReference type="EMBL" id="AF022214">
    <property type="protein sequence ID" value="AAC18520.1"/>
    <property type="molecule type" value="Genomic_DNA"/>
</dbReference>
<dbReference type="PIR" id="H72807">
    <property type="entry name" value="H72807"/>
</dbReference>
<dbReference type="RefSeq" id="NP_046882.1">
    <property type="nucleotide sequence ID" value="NC_001900.1"/>
</dbReference>
<dbReference type="SMR" id="O64257"/>
<dbReference type="GeneID" id="1261634"/>
<dbReference type="KEGG" id="vg:1261634"/>
<dbReference type="OrthoDB" id="5532at10239"/>
<dbReference type="Proteomes" id="UP000002131">
    <property type="component" value="Segment"/>
</dbReference>
<dbReference type="GO" id="GO:0005524">
    <property type="term" value="F:ATP binding"/>
    <property type="evidence" value="ECO:0007669"/>
    <property type="project" value="InterPro"/>
</dbReference>
<dbReference type="GO" id="GO:0003678">
    <property type="term" value="F:DNA helicase activity"/>
    <property type="evidence" value="ECO:0007669"/>
    <property type="project" value="InterPro"/>
</dbReference>
<dbReference type="GO" id="GO:0008310">
    <property type="term" value="F:single-stranded DNA 3'-5' DNA exonuclease activity"/>
    <property type="evidence" value="ECO:0000314"/>
    <property type="project" value="CACAO"/>
</dbReference>
<dbReference type="GO" id="GO:0006260">
    <property type="term" value="P:DNA replication"/>
    <property type="evidence" value="ECO:0007669"/>
    <property type="project" value="InterPro"/>
</dbReference>
<dbReference type="Gene3D" id="3.40.50.300">
    <property type="entry name" value="P-loop containing nucleotide triphosphate hydrolases"/>
    <property type="match status" value="1"/>
</dbReference>
<dbReference type="InterPro" id="IPR007694">
    <property type="entry name" value="DNA_helicase_DnaB-like_C"/>
</dbReference>
<dbReference type="InterPro" id="IPR027417">
    <property type="entry name" value="P-loop_NTPase"/>
</dbReference>
<dbReference type="Pfam" id="PF03796">
    <property type="entry name" value="DnaB_C"/>
    <property type="match status" value="1"/>
</dbReference>
<dbReference type="SUPFAM" id="SSF52540">
    <property type="entry name" value="P-loop containing nucleoside triphosphate hydrolases"/>
    <property type="match status" value="1"/>
</dbReference>
<keyword id="KW-1185">Reference proteome</keyword>
<reference key="1">
    <citation type="journal article" date="1998" name="J. Mol. Biol.">
        <title>Genome structure of mycobacteriophage D29: implications for phage evolution.</title>
        <authorList>
            <person name="Ford M.E."/>
            <person name="Sarkis G.J."/>
            <person name="Belanger A.E."/>
            <person name="Hendrix R.W."/>
            <person name="Hatfull G.F."/>
        </authorList>
    </citation>
    <scope>NUCLEOTIDE SEQUENCE [LARGE SCALE GENOMIC DNA]</scope>
</reference>
<gene>
    <name type="primary">65</name>
</gene>